<feature type="chain" id="PRO_0000217339" description="Uncharacterized protein ycf23">
    <location>
        <begin position="1"/>
        <end position="265"/>
    </location>
</feature>
<accession>P51373</accession>
<gene>
    <name type="primary">ycf23</name>
</gene>
<comment type="subcellular location">
    <subcellularLocation>
        <location>Plastid</location>
        <location>Chloroplast</location>
    </subcellularLocation>
</comment>
<comment type="similarity">
    <text evidence="1">Belongs to the ycf23 family.</text>
</comment>
<proteinExistence type="inferred from homology"/>
<evidence type="ECO:0000305" key="1"/>
<dbReference type="EMBL" id="U38804">
    <property type="protein sequence ID" value="AAC08259.1"/>
    <property type="molecule type" value="Genomic_DNA"/>
</dbReference>
<dbReference type="PIR" id="S73294">
    <property type="entry name" value="S73294"/>
</dbReference>
<dbReference type="RefSeq" id="NP_053983.1">
    <property type="nucleotide sequence ID" value="NC_000925.1"/>
</dbReference>
<dbReference type="GeneID" id="810013"/>
<dbReference type="GO" id="GO:0009507">
    <property type="term" value="C:chloroplast"/>
    <property type="evidence" value="ECO:0007669"/>
    <property type="project" value="UniProtKB-SubCell"/>
</dbReference>
<dbReference type="InterPro" id="IPR007570">
    <property type="entry name" value="Uncharacterised_Ycf23"/>
</dbReference>
<dbReference type="PANTHER" id="PTHR36895">
    <property type="match status" value="1"/>
</dbReference>
<dbReference type="PANTHER" id="PTHR36895:SF1">
    <property type="entry name" value="YCF23 PROTEIN"/>
    <property type="match status" value="1"/>
</dbReference>
<dbReference type="Pfam" id="PF04481">
    <property type="entry name" value="DUF561"/>
    <property type="match status" value="1"/>
</dbReference>
<dbReference type="SUPFAM" id="SSF51569">
    <property type="entry name" value="Aldolase"/>
    <property type="match status" value="1"/>
</dbReference>
<name>YCF23_PORPU</name>
<organism>
    <name type="scientific">Porphyra purpurea</name>
    <name type="common">Red seaweed</name>
    <name type="synonym">Ulva purpurea</name>
    <dbReference type="NCBI Taxonomy" id="2787"/>
    <lineage>
        <taxon>Eukaryota</taxon>
        <taxon>Rhodophyta</taxon>
        <taxon>Bangiophyceae</taxon>
        <taxon>Bangiales</taxon>
        <taxon>Bangiaceae</taxon>
        <taxon>Porphyra</taxon>
    </lineage>
</organism>
<reference key="1">
    <citation type="journal article" date="1995" name="Plant Mol. Biol. Rep.">
        <title>Complete nucleotide sequence of the Porphyra purpurea chloroplast genome.</title>
        <authorList>
            <person name="Reith M.E."/>
            <person name="Munholland J."/>
        </authorList>
    </citation>
    <scope>NUCLEOTIDE SEQUENCE [LARGE SCALE GENOMIC DNA]</scope>
    <source>
        <strain>Avonport</strain>
    </source>
</reference>
<protein>
    <recommendedName>
        <fullName>Uncharacterized protein ycf23</fullName>
    </recommendedName>
</protein>
<geneLocation type="chloroplast"/>
<sequence length="265" mass="29089">MTISSKISSDFDKQSALKVITGLNNFNIPQIKQMALASEIAKVTYLDIVADTDIIKEVESVSKIPICVSAVKSKELLKCQKTGVNILEIGNYDCFYEQGRLFHSEEIKLISKETRNLLPHATLCVTLPHILKIEEQVKLASDLQRIGIDMIQTEGKSTSISKTDHLSGMIQKSASTFSSTYTVSSKIRLPIISASGISSLTSPIAFLYGASGIGIGSNIRRLQDIGSMVIYIYEVQAAISSNHNIQQNINHSIQSSKISHQLIPY</sequence>
<keyword id="KW-0150">Chloroplast</keyword>
<keyword id="KW-0934">Plastid</keyword>